<feature type="chain" id="PRO_0000328111" description="Folic acid synthesis protein FOL1">
    <location>
        <begin position="1"/>
        <end position="657"/>
    </location>
</feature>
<feature type="domain" description="Pterin-binding" evidence="4">
    <location>
        <begin position="333"/>
        <end position="641"/>
    </location>
</feature>
<feature type="region of interest" description="DHNA">
    <location>
        <begin position="1"/>
        <end position="116"/>
    </location>
</feature>
<feature type="region of interest" description="HPPK">
    <location>
        <begin position="149"/>
        <end position="274"/>
    </location>
</feature>
<feature type="region of interest" description="DHPS">
    <location>
        <begin position="335"/>
        <end position="657"/>
    </location>
</feature>
<feature type="region of interest" description="Disordered" evidence="5">
    <location>
        <begin position="466"/>
        <end position="524"/>
    </location>
</feature>
<feature type="compositionally biased region" description="Low complexity" evidence="5">
    <location>
        <begin position="467"/>
        <end position="509"/>
    </location>
</feature>
<feature type="compositionally biased region" description="Basic and acidic residues" evidence="5">
    <location>
        <begin position="514"/>
        <end position="524"/>
    </location>
</feature>
<feature type="binding site" evidence="3">
    <location>
        <position position="340"/>
    </location>
    <ligand>
        <name>Mg(2+)</name>
        <dbReference type="ChEBI" id="CHEBI:18420"/>
    </ligand>
</feature>
<feature type="binding site" evidence="1">
    <location>
        <position position="380"/>
    </location>
    <ligand>
        <name>(7,8-dihydropterin-6-yl)methyl diphosphate</name>
        <dbReference type="ChEBI" id="CHEBI:72950"/>
    </ligand>
</feature>
<feature type="binding site" evidence="1">
    <location>
        <position position="416"/>
    </location>
    <ligand>
        <name>(7,8-dihydropterin-6-yl)methyl diphosphate</name>
        <dbReference type="ChEBI" id="CHEBI:72950"/>
    </ligand>
</feature>
<feature type="binding site" evidence="1">
    <location>
        <position position="435"/>
    </location>
    <ligand>
        <name>(7,8-dihydropterin-6-yl)methyl diphosphate</name>
        <dbReference type="ChEBI" id="CHEBI:72950"/>
    </ligand>
</feature>
<feature type="binding site" evidence="1">
    <location>
        <position position="547"/>
    </location>
    <ligand>
        <name>(7,8-dihydropterin-6-yl)methyl diphosphate</name>
        <dbReference type="ChEBI" id="CHEBI:72950"/>
    </ligand>
</feature>
<feature type="binding site" evidence="1">
    <location>
        <position position="583"/>
    </location>
    <ligand>
        <name>(7,8-dihydropterin-6-yl)methyl diphosphate</name>
        <dbReference type="ChEBI" id="CHEBI:72950"/>
    </ligand>
</feature>
<feature type="binding site" evidence="1">
    <location>
        <begin position="629"/>
        <end position="631"/>
    </location>
    <ligand>
        <name>(7,8-dihydropterin-6-yl)methyl diphosphate</name>
        <dbReference type="ChEBI" id="CHEBI:72950"/>
    </ligand>
</feature>
<name>FOL1_DICDI</name>
<comment type="function">
    <text evidence="2">Catalyzes three sequential steps of tetrahydrofolate biosynthesis.</text>
</comment>
<comment type="catalytic activity">
    <reaction evidence="2">
        <text>7,8-dihydroneopterin = 6-hydroxymethyl-7,8-dihydropterin + glycolaldehyde</text>
        <dbReference type="Rhea" id="RHEA:10540"/>
        <dbReference type="ChEBI" id="CHEBI:17001"/>
        <dbReference type="ChEBI" id="CHEBI:17071"/>
        <dbReference type="ChEBI" id="CHEBI:44841"/>
        <dbReference type="EC" id="4.1.2.25"/>
    </reaction>
</comment>
<comment type="catalytic activity">
    <reaction evidence="2">
        <text>6-hydroxymethyl-7,8-dihydropterin + ATP = (7,8-dihydropterin-6-yl)methyl diphosphate + AMP + H(+)</text>
        <dbReference type="Rhea" id="RHEA:11412"/>
        <dbReference type="ChEBI" id="CHEBI:15378"/>
        <dbReference type="ChEBI" id="CHEBI:30616"/>
        <dbReference type="ChEBI" id="CHEBI:44841"/>
        <dbReference type="ChEBI" id="CHEBI:72950"/>
        <dbReference type="ChEBI" id="CHEBI:456215"/>
        <dbReference type="EC" id="2.7.6.3"/>
    </reaction>
</comment>
<comment type="catalytic activity">
    <reaction evidence="2">
        <text>(7,8-dihydropterin-6-yl)methyl diphosphate + 4-aminobenzoate = 7,8-dihydropteroate + diphosphate</text>
        <dbReference type="Rhea" id="RHEA:19949"/>
        <dbReference type="ChEBI" id="CHEBI:17836"/>
        <dbReference type="ChEBI" id="CHEBI:17839"/>
        <dbReference type="ChEBI" id="CHEBI:33019"/>
        <dbReference type="ChEBI" id="CHEBI:72950"/>
        <dbReference type="EC" id="2.5.1.15"/>
    </reaction>
</comment>
<comment type="cofactor">
    <cofactor evidence="1">
        <name>Mg(2+)</name>
        <dbReference type="ChEBI" id="CHEBI:18420"/>
    </cofactor>
</comment>
<comment type="pathway">
    <text>Cofactor biosynthesis; tetrahydrofolate biosynthesis; 2-amino-4-hydroxy-6-hydroxymethyl-7,8-dihydropteridine diphosphate from 7,8-dihydroneopterin triphosphate: step 3/4.</text>
</comment>
<comment type="pathway">
    <text>Cofactor biosynthesis; tetrahydrofolate biosynthesis; 2-amino-4-hydroxy-6-hydroxymethyl-7,8-dihydropteridine diphosphate from 7,8-dihydroneopterin triphosphate: step 4/4.</text>
</comment>
<comment type="pathway">
    <text>Cofactor biosynthesis; tetrahydrofolate biosynthesis; 7,8-dihydrofolate from 2-amino-4-hydroxy-6-hydroxymethyl-7,8-dihydropteridine diphosphate and 4-aminobenzoate: step 1/2.</text>
</comment>
<comment type="similarity">
    <text evidence="6">In the N-terminal section; belongs to the DHNA family.</text>
</comment>
<comment type="similarity">
    <text evidence="6">In the central section; belongs to the HPPK family.</text>
</comment>
<comment type="similarity">
    <text evidence="6">In the C-terminal section; belongs to the DHPS family.</text>
</comment>
<organism>
    <name type="scientific">Dictyostelium discoideum</name>
    <name type="common">Social amoeba</name>
    <dbReference type="NCBI Taxonomy" id="44689"/>
    <lineage>
        <taxon>Eukaryota</taxon>
        <taxon>Amoebozoa</taxon>
        <taxon>Evosea</taxon>
        <taxon>Eumycetozoa</taxon>
        <taxon>Dictyostelia</taxon>
        <taxon>Dictyosteliales</taxon>
        <taxon>Dictyosteliaceae</taxon>
        <taxon>Dictyostelium</taxon>
    </lineage>
</organism>
<reference key="1">
    <citation type="journal article" date="2005" name="Nature">
        <title>The genome of the social amoeba Dictyostelium discoideum.</title>
        <authorList>
            <person name="Eichinger L."/>
            <person name="Pachebat J.A."/>
            <person name="Gloeckner G."/>
            <person name="Rajandream M.A."/>
            <person name="Sucgang R."/>
            <person name="Berriman M."/>
            <person name="Song J."/>
            <person name="Olsen R."/>
            <person name="Szafranski K."/>
            <person name="Xu Q."/>
            <person name="Tunggal B."/>
            <person name="Kummerfeld S."/>
            <person name="Madera M."/>
            <person name="Konfortov B.A."/>
            <person name="Rivero F."/>
            <person name="Bankier A.T."/>
            <person name="Lehmann R."/>
            <person name="Hamlin N."/>
            <person name="Davies R."/>
            <person name="Gaudet P."/>
            <person name="Fey P."/>
            <person name="Pilcher K."/>
            <person name="Chen G."/>
            <person name="Saunders D."/>
            <person name="Sodergren E.J."/>
            <person name="Davis P."/>
            <person name="Kerhornou A."/>
            <person name="Nie X."/>
            <person name="Hall N."/>
            <person name="Anjard C."/>
            <person name="Hemphill L."/>
            <person name="Bason N."/>
            <person name="Farbrother P."/>
            <person name="Desany B."/>
            <person name="Just E."/>
            <person name="Morio T."/>
            <person name="Rost R."/>
            <person name="Churcher C.M."/>
            <person name="Cooper J."/>
            <person name="Haydock S."/>
            <person name="van Driessche N."/>
            <person name="Cronin A."/>
            <person name="Goodhead I."/>
            <person name="Muzny D.M."/>
            <person name="Mourier T."/>
            <person name="Pain A."/>
            <person name="Lu M."/>
            <person name="Harper D."/>
            <person name="Lindsay R."/>
            <person name="Hauser H."/>
            <person name="James K.D."/>
            <person name="Quiles M."/>
            <person name="Madan Babu M."/>
            <person name="Saito T."/>
            <person name="Buchrieser C."/>
            <person name="Wardroper A."/>
            <person name="Felder M."/>
            <person name="Thangavelu M."/>
            <person name="Johnson D."/>
            <person name="Knights A."/>
            <person name="Loulseged H."/>
            <person name="Mungall K.L."/>
            <person name="Oliver K."/>
            <person name="Price C."/>
            <person name="Quail M.A."/>
            <person name="Urushihara H."/>
            <person name="Hernandez J."/>
            <person name="Rabbinowitsch E."/>
            <person name="Steffen D."/>
            <person name="Sanders M."/>
            <person name="Ma J."/>
            <person name="Kohara Y."/>
            <person name="Sharp S."/>
            <person name="Simmonds M.N."/>
            <person name="Spiegler S."/>
            <person name="Tivey A."/>
            <person name="Sugano S."/>
            <person name="White B."/>
            <person name="Walker D."/>
            <person name="Woodward J.R."/>
            <person name="Winckler T."/>
            <person name="Tanaka Y."/>
            <person name="Shaulsky G."/>
            <person name="Schleicher M."/>
            <person name="Weinstock G.M."/>
            <person name="Rosenthal A."/>
            <person name="Cox E.C."/>
            <person name="Chisholm R.L."/>
            <person name="Gibbs R.A."/>
            <person name="Loomis W.F."/>
            <person name="Platzer M."/>
            <person name="Kay R.R."/>
            <person name="Williams J.G."/>
            <person name="Dear P.H."/>
            <person name="Noegel A.A."/>
            <person name="Barrell B.G."/>
            <person name="Kuspa A."/>
        </authorList>
    </citation>
    <scope>NUCLEOTIDE SEQUENCE [LARGE SCALE GENOMIC DNA]</scope>
    <source>
        <strain>AX4</strain>
    </source>
</reference>
<sequence>MDKIIIKDLLIQAVIGVNPGERIIKQNIIISVTAYKDLSKCGSSDNVIDTVSYSSLSKSICSYSESSHHYTLEALATGVAKICCLGFGIERVKVLVQKPGAIKLAKWPGVQIERTLDYFKSNSFVEIPSKLINNNKNSNNSNAGNNIVYLAFGSNLGDKFQNILNSFKRLEKQCFIQSTSFMYESSPQYYREQDSFYNCACKVSTDLKPHDLLKFIKQIENDMGRVETFRNGPRVIDIDIIYYNGLIIKTDDLEIPHPLMWERDFVLLPLSDIAPNFIHPTLHITTNRMKLNLPNGGNIHNIPPPPTATTTCNNIIEKVIRIGNLNYNWNDKTFIMGILNVTPDSFVDGGKFNTLEKSIQQATALIEQGADIIDIGGQSTYPGAQQISIEEEINRVVPTIKKIREVLGNDIPLSIDTLHHQVAKEAILAGCNIINDVSGEFRVPIILNHSQPTTQYLQQKQNEQYLNNSNDSNSNSSINTNGEDNNNNNNNNNNNNNNNNNNNNNNNNNDDNDNDNRSKIKQKIDLSSPKIETCTKLGLFRWQIILDPGLGFYKTYEQSIEILQRGKELMGLGFPVLIGPSRKGFIANTIANAEKDKSLPPPSPKSERRLWGTIACCCIGSMWGANIIRIHDIPEIRDAMLISDSVNKPQRRYQIQK</sequence>
<dbReference type="EC" id="4.1.2.25"/>
<dbReference type="EC" id="2.7.6.3"/>
<dbReference type="EC" id="2.5.1.15"/>
<dbReference type="EMBL" id="AAFI02000023">
    <property type="protein sequence ID" value="EAL68314.1"/>
    <property type="molecule type" value="Genomic_DNA"/>
</dbReference>
<dbReference type="RefSeq" id="XP_642263.1">
    <property type="nucleotide sequence ID" value="XM_637171.1"/>
</dbReference>
<dbReference type="SMR" id="Q54YD9"/>
<dbReference type="FunCoup" id="Q54YD9">
    <property type="interactions" value="98"/>
</dbReference>
<dbReference type="STRING" id="44689.Q54YD9"/>
<dbReference type="GlyGen" id="Q54YD9">
    <property type="glycosylation" value="1 site"/>
</dbReference>
<dbReference type="PaxDb" id="44689-DDB0230139"/>
<dbReference type="EnsemblProtists" id="EAL68314">
    <property type="protein sequence ID" value="EAL68314"/>
    <property type="gene ID" value="DDB_G0278283"/>
</dbReference>
<dbReference type="GeneID" id="8621472"/>
<dbReference type="KEGG" id="ddi:DDB_G0278283"/>
<dbReference type="dictyBase" id="DDB_G0278283">
    <property type="gene designation" value="fol1"/>
</dbReference>
<dbReference type="VEuPathDB" id="AmoebaDB:DDB_G0278283"/>
<dbReference type="eggNOG" id="KOG2544">
    <property type="taxonomic scope" value="Eukaryota"/>
</dbReference>
<dbReference type="HOGENOM" id="CLU_008023_2_0_1"/>
<dbReference type="InParanoid" id="Q54YD9"/>
<dbReference type="OMA" id="NIPHKLM"/>
<dbReference type="PhylomeDB" id="Q54YD9"/>
<dbReference type="UniPathway" id="UPA00077">
    <property type="reaction ID" value="UER00154"/>
</dbReference>
<dbReference type="UniPathway" id="UPA00077">
    <property type="reaction ID" value="UER00155"/>
</dbReference>
<dbReference type="UniPathway" id="UPA00077">
    <property type="reaction ID" value="UER00156"/>
</dbReference>
<dbReference type="PRO" id="PR:Q54YD9"/>
<dbReference type="Proteomes" id="UP000002195">
    <property type="component" value="Chromosome 3"/>
</dbReference>
<dbReference type="GO" id="GO:0005740">
    <property type="term" value="C:mitochondrial envelope"/>
    <property type="evidence" value="ECO:0000318"/>
    <property type="project" value="GO_Central"/>
</dbReference>
<dbReference type="GO" id="GO:0003848">
    <property type="term" value="F:2-amino-4-hydroxy-6-hydroxymethyldihydropteridine diphosphokinase activity"/>
    <property type="evidence" value="ECO:0007669"/>
    <property type="project" value="UniProtKB-EC"/>
</dbReference>
<dbReference type="GO" id="GO:0005524">
    <property type="term" value="F:ATP binding"/>
    <property type="evidence" value="ECO:0007669"/>
    <property type="project" value="UniProtKB-KW"/>
</dbReference>
<dbReference type="GO" id="GO:0004150">
    <property type="term" value="F:dihydroneopterin aldolase activity"/>
    <property type="evidence" value="ECO:0007669"/>
    <property type="project" value="UniProtKB-EC"/>
</dbReference>
<dbReference type="GO" id="GO:0004156">
    <property type="term" value="F:dihydropteroate synthase activity"/>
    <property type="evidence" value="ECO:0000318"/>
    <property type="project" value="GO_Central"/>
</dbReference>
<dbReference type="GO" id="GO:0016301">
    <property type="term" value="F:kinase activity"/>
    <property type="evidence" value="ECO:0007669"/>
    <property type="project" value="UniProtKB-KW"/>
</dbReference>
<dbReference type="GO" id="GO:0046872">
    <property type="term" value="F:metal ion binding"/>
    <property type="evidence" value="ECO:0007669"/>
    <property type="project" value="UniProtKB-KW"/>
</dbReference>
<dbReference type="GO" id="GO:0046656">
    <property type="term" value="P:folic acid biosynthetic process"/>
    <property type="evidence" value="ECO:0007669"/>
    <property type="project" value="UniProtKB-KW"/>
</dbReference>
<dbReference type="GO" id="GO:0046654">
    <property type="term" value="P:tetrahydrofolate biosynthetic process"/>
    <property type="evidence" value="ECO:0000318"/>
    <property type="project" value="GO_Central"/>
</dbReference>
<dbReference type="CDD" id="cd00739">
    <property type="entry name" value="DHPS"/>
    <property type="match status" value="1"/>
</dbReference>
<dbReference type="CDD" id="cd00483">
    <property type="entry name" value="HPPK"/>
    <property type="match status" value="1"/>
</dbReference>
<dbReference type="FunFam" id="3.30.1130.10:FF:000010">
    <property type="entry name" value="Folic acid synthesis protein fol1"/>
    <property type="match status" value="1"/>
</dbReference>
<dbReference type="Gene3D" id="3.30.1130.10">
    <property type="match status" value="1"/>
</dbReference>
<dbReference type="Gene3D" id="3.30.70.560">
    <property type="entry name" value="7,8-Dihydro-6-hydroxymethylpterin-pyrophosphokinase HPPK"/>
    <property type="match status" value="1"/>
</dbReference>
<dbReference type="Gene3D" id="3.20.20.20">
    <property type="entry name" value="Dihydropteroate synthase-like"/>
    <property type="match status" value="1"/>
</dbReference>
<dbReference type="InterPro" id="IPR045031">
    <property type="entry name" value="DHP_synth-like"/>
</dbReference>
<dbReference type="InterPro" id="IPR006390">
    <property type="entry name" value="DHP_synth_dom"/>
</dbReference>
<dbReference type="InterPro" id="IPR011005">
    <property type="entry name" value="Dihydropteroate_synth-like_sf"/>
</dbReference>
<dbReference type="InterPro" id="IPR006157">
    <property type="entry name" value="FolB_dom"/>
</dbReference>
<dbReference type="InterPro" id="IPR043133">
    <property type="entry name" value="GTP-CH-I_C/QueF"/>
</dbReference>
<dbReference type="InterPro" id="IPR000550">
    <property type="entry name" value="Hppk"/>
</dbReference>
<dbReference type="InterPro" id="IPR035907">
    <property type="entry name" value="Hppk_sf"/>
</dbReference>
<dbReference type="InterPro" id="IPR000489">
    <property type="entry name" value="Pterin-binding_dom"/>
</dbReference>
<dbReference type="NCBIfam" id="TIGR00526">
    <property type="entry name" value="folB_dom"/>
    <property type="match status" value="1"/>
</dbReference>
<dbReference type="NCBIfam" id="TIGR01498">
    <property type="entry name" value="folK"/>
    <property type="match status" value="1"/>
</dbReference>
<dbReference type="PANTHER" id="PTHR20941">
    <property type="entry name" value="FOLATE SYNTHESIS PROTEINS"/>
    <property type="match status" value="1"/>
</dbReference>
<dbReference type="PANTHER" id="PTHR20941:SF1">
    <property type="entry name" value="FOLIC ACID SYNTHESIS PROTEIN FOL1"/>
    <property type="match status" value="1"/>
</dbReference>
<dbReference type="Pfam" id="PF02152">
    <property type="entry name" value="FolB"/>
    <property type="match status" value="1"/>
</dbReference>
<dbReference type="Pfam" id="PF01288">
    <property type="entry name" value="HPPK"/>
    <property type="match status" value="1"/>
</dbReference>
<dbReference type="Pfam" id="PF00809">
    <property type="entry name" value="Pterin_bind"/>
    <property type="match status" value="2"/>
</dbReference>
<dbReference type="SMART" id="SM00905">
    <property type="entry name" value="FolB"/>
    <property type="match status" value="1"/>
</dbReference>
<dbReference type="SUPFAM" id="SSF55083">
    <property type="entry name" value="6-hydroxymethyl-7,8-dihydropterin pyrophosphokinase, HPPK"/>
    <property type="match status" value="1"/>
</dbReference>
<dbReference type="SUPFAM" id="SSF51717">
    <property type="entry name" value="Dihydropteroate synthetase-like"/>
    <property type="match status" value="1"/>
</dbReference>
<dbReference type="SUPFAM" id="SSF55620">
    <property type="entry name" value="Tetrahydrobiopterin biosynthesis enzymes-like"/>
    <property type="match status" value="1"/>
</dbReference>
<dbReference type="PROSITE" id="PS00792">
    <property type="entry name" value="DHPS_1"/>
    <property type="match status" value="1"/>
</dbReference>
<dbReference type="PROSITE" id="PS00793">
    <property type="entry name" value="DHPS_2"/>
    <property type="match status" value="1"/>
</dbReference>
<dbReference type="PROSITE" id="PS00794">
    <property type="entry name" value="HPPK"/>
    <property type="match status" value="1"/>
</dbReference>
<dbReference type="PROSITE" id="PS50972">
    <property type="entry name" value="PTERIN_BINDING"/>
    <property type="match status" value="1"/>
</dbReference>
<gene>
    <name type="primary">fol1</name>
    <name type="ORF">DDB_G0278283</name>
</gene>
<protein>
    <recommendedName>
        <fullName>Folic acid synthesis protein FOL1</fullName>
    </recommendedName>
    <domain>
        <recommendedName>
            <fullName>Dihydroneopterin aldolase</fullName>
            <shortName>DHNA</shortName>
            <ecNumber>4.1.2.25</ecNumber>
        </recommendedName>
        <alternativeName>
            <fullName>7,8-dihydroneopterin aldolase</fullName>
        </alternativeName>
    </domain>
    <domain>
        <recommendedName>
            <fullName>6-hydroxymethyl-7,8-dihydropterin pyrophosphokinase</fullName>
            <shortName>HPPK</shortName>
        </recommendedName>
        <alternativeName>
            <fullName>2-amino-4-hydroxy-6-hydroxymethyldihydropteridine pyrophosphokinase</fullName>
            <ecNumber>2.7.6.3</ecNumber>
        </alternativeName>
        <alternativeName>
            <fullName>7,8-dihydro-6-hydroxymethylpterin-pyrophosphokinase</fullName>
            <shortName>PPPK</shortName>
        </alternativeName>
    </domain>
    <domain>
        <recommendedName>
            <fullName>Dihydropteroate synthase</fullName>
            <shortName>DHPS</shortName>
            <ecNumber>2.5.1.15</ecNumber>
        </recommendedName>
        <alternativeName>
            <fullName>Dihydropteroate pyrophosphorylase</fullName>
        </alternativeName>
    </domain>
</protein>
<accession>Q54YD9</accession>
<proteinExistence type="inferred from homology"/>
<evidence type="ECO:0000250" key="1">
    <source>
        <dbReference type="UniProtKB" id="P0AC13"/>
    </source>
</evidence>
<evidence type="ECO:0000250" key="2">
    <source>
        <dbReference type="UniProtKB" id="P53848"/>
    </source>
</evidence>
<evidence type="ECO:0000250" key="3">
    <source>
        <dbReference type="UniProtKB" id="P9WND1"/>
    </source>
</evidence>
<evidence type="ECO:0000255" key="4">
    <source>
        <dbReference type="PROSITE-ProRule" id="PRU00334"/>
    </source>
</evidence>
<evidence type="ECO:0000256" key="5">
    <source>
        <dbReference type="SAM" id="MobiDB-lite"/>
    </source>
</evidence>
<evidence type="ECO:0000305" key="6"/>
<keyword id="KW-0067">ATP-binding</keyword>
<keyword id="KW-0289">Folate biosynthesis</keyword>
<keyword id="KW-0418">Kinase</keyword>
<keyword id="KW-0456">Lyase</keyword>
<keyword id="KW-0460">Magnesium</keyword>
<keyword id="KW-0479">Metal-binding</keyword>
<keyword id="KW-0511">Multifunctional enzyme</keyword>
<keyword id="KW-0547">Nucleotide-binding</keyword>
<keyword id="KW-1185">Reference proteome</keyword>
<keyword id="KW-0808">Transferase</keyword>